<name>LIN54_HUMAN</name>
<comment type="function">
    <text evidence="3 4 5 6">Component of the DREAM complex, a multiprotein complex that can both act as a transcription activator or repressor depending on the context (PubMed:17531812, PubMed:17671431). In G0 phase, the complex binds to more than 800 promoters and is required for repression of E2F target genes (PubMed:17531812, PubMed:17671431). In S phase, the complex selectively binds to the promoters of G2/M genes whose products are required for mitosis and participates in their cell cycle dependent activation (PubMed:17531812, PubMed:17671431). In the complex, acts as a DNA-binding protein that binds the promoter of CDK1 in a sequence-specific manner (PubMed:19725879). Specifically recognizes the consensus motif 5'-TTYRAA-3' in target DNA (PubMed:27465258).</text>
</comment>
<comment type="subunit">
    <text evidence="3 4">Component of the DREAM complex (also named LINC complex) at least composed of E2F4, E2F5, LIN9, LIN37, LIN52, LIN54, MYBL1, MYBL2, RBL1, RBL2, RBBP4, TFDP1 and TFDP2. The complex exists in quiescent cells where it represses cell cycle-dependent genes. It dissociates in S phase when LIN9, LIN37, LIN52 and LIN54 form a subcomplex that binds to MYBL2.</text>
</comment>
<comment type="interaction">
    <interactant intactId="EBI-1389411">
        <id>Q6MZP7</id>
    </interactant>
    <interactant intactId="EBI-11524452">
        <id>Q8N9N5-2</id>
        <label>BANP</label>
    </interactant>
    <organismsDiffer>false</organismsDiffer>
    <experiments>3</experiments>
</comment>
<comment type="interaction">
    <interactant intactId="EBI-1389411">
        <id>Q6MZP7</id>
    </interactant>
    <interactant intactId="EBI-1389468">
        <id>P10244</id>
        <label>MYBL2</label>
    </interactant>
    <organismsDiffer>false</organismsDiffer>
    <experiments>4</experiments>
</comment>
<comment type="interaction">
    <interactant intactId="EBI-1389411">
        <id>Q6MZP7</id>
    </interactant>
    <interactant intactId="EBI-11956831">
        <id>Q13952-2</id>
        <label>NFYC</label>
    </interactant>
    <organismsDiffer>false</organismsDiffer>
    <experiments>3</experiments>
</comment>
<comment type="interaction">
    <interactant intactId="EBI-1389411">
        <id>Q6MZP7</id>
    </interactant>
    <interactant intactId="EBI-971439">
        <id>Q08999</id>
        <label>RBL2</label>
    </interactant>
    <organismsDiffer>false</organismsDiffer>
    <experiments>10</experiments>
</comment>
<comment type="interaction">
    <interactant intactId="EBI-1389411">
        <id>Q6MZP7</id>
    </interactant>
    <interactant intactId="EBI-2462271">
        <id>Q15428</id>
        <label>SF3A2</label>
    </interactant>
    <organismsDiffer>false</organismsDiffer>
    <experiments>3</experiments>
</comment>
<comment type="interaction">
    <interactant intactId="EBI-1389411">
        <id>Q6MZP7</id>
    </interactant>
    <interactant intactId="EBI-348158">
        <id>Q02447</id>
        <label>SP3</label>
    </interactant>
    <organismsDiffer>false</organismsDiffer>
    <experiments>3</experiments>
</comment>
<comment type="interaction">
    <interactant intactId="EBI-1389411">
        <id>Q6MZP7</id>
    </interactant>
    <interactant intactId="EBI-2849334">
        <id>P52747</id>
        <label>ZNF143</label>
    </interactant>
    <organismsDiffer>false</organismsDiffer>
    <experiments>3</experiments>
</comment>
<comment type="interaction">
    <interactant intactId="EBI-1389411">
        <id>Q6MZP7</id>
    </interactant>
    <interactant intactId="EBI-7254550">
        <id>P36508</id>
        <label>ZNF76</label>
    </interactant>
    <organismsDiffer>false</organismsDiffer>
    <experiments>3</experiments>
</comment>
<comment type="subcellular location">
    <subcellularLocation>
        <location evidence="11">Nucleus</location>
    </subcellularLocation>
</comment>
<comment type="alternative products">
    <event type="alternative splicing"/>
    <isoform>
        <id>Q6MZP7-1</id>
        <name>1</name>
        <sequence type="displayed"/>
    </isoform>
    <isoform>
        <id>Q6MZP7-2</id>
        <name>2</name>
        <sequence type="described" ref="VSP_034274"/>
    </isoform>
    <isoform>
        <id>Q6MZP7-3</id>
        <name>3</name>
        <sequence type="described" ref="VSP_034273"/>
    </isoform>
    <isoform>
        <id>Q6MZP7-4</id>
        <name>4</name>
        <sequence type="described" ref="VSP_034272"/>
    </isoform>
    <isoform>
        <id>Q6MZP7-5</id>
        <name>5</name>
        <sequence type="described" ref="VSP_034275 VSP_034276"/>
    </isoform>
</comment>
<comment type="domain">
    <text evidence="5 6">The CRC domain mediates DNA-binding (PubMed:19725879, PubMed:27465258). It contains two CXC subdomains (joined by a flexible linker) which are both required for efficient association with target DNA (PubMed:27465258). Each CXC subdomain coordinates three Zn(2+) ions (PubMed:27465258).</text>
</comment>
<comment type="similarity">
    <text evidence="11">Belongs to the lin-54 family.</text>
</comment>
<comment type="sequence caution" evidence="11">
    <conflict type="erroneous initiation">
        <sequence resource="EMBL-CDS" id="BAC98377"/>
    </conflict>
    <text>Extended N-terminus.</text>
</comment>
<feature type="chain" id="PRO_0000341389" description="Protein lin-54 homolog">
    <location>
        <begin position="1"/>
        <end position="749"/>
    </location>
</feature>
<feature type="domain" description="CRC" evidence="1">
    <location>
        <begin position="521"/>
        <end position="634"/>
    </location>
</feature>
<feature type="region of interest" description="Disordered" evidence="2">
    <location>
        <begin position="369"/>
        <end position="388"/>
    </location>
</feature>
<feature type="region of interest" description="DNA-binding" evidence="6">
    <location>
        <begin position="523"/>
        <end position="536"/>
    </location>
</feature>
<feature type="region of interest" description="Linker" evidence="6">
    <location>
        <begin position="583"/>
        <end position="596"/>
    </location>
</feature>
<feature type="region of interest" description="DNA-binding" evidence="6">
    <location>
        <begin position="599"/>
        <end position="612"/>
    </location>
</feature>
<feature type="binding site" evidence="12">
    <location>
        <position position="525"/>
    </location>
    <ligand>
        <name>Zn(2+)</name>
        <dbReference type="ChEBI" id="CHEBI:29105"/>
        <label>1</label>
    </ligand>
</feature>
<feature type="binding site" evidence="12">
    <location>
        <position position="525"/>
    </location>
    <ligand>
        <name>Zn(2+)</name>
        <dbReference type="ChEBI" id="CHEBI:29105"/>
        <label>2</label>
    </ligand>
</feature>
<feature type="binding site" evidence="12">
    <location>
        <position position="527"/>
    </location>
    <ligand>
        <name>Zn(2+)</name>
        <dbReference type="ChEBI" id="CHEBI:29105"/>
        <label>1</label>
    </ligand>
</feature>
<feature type="binding site" evidence="12">
    <location>
        <position position="532"/>
    </location>
    <ligand>
        <name>Zn(2+)</name>
        <dbReference type="ChEBI" id="CHEBI:29105"/>
        <label>1</label>
    </ligand>
</feature>
<feature type="binding site" evidence="12">
    <location>
        <position position="532"/>
    </location>
    <ligand>
        <name>Zn(2+)</name>
        <dbReference type="ChEBI" id="CHEBI:29105"/>
        <label>3</label>
    </ligand>
</feature>
<feature type="binding site" evidence="12">
    <location>
        <position position="537"/>
    </location>
    <ligand>
        <name>Zn(2+)</name>
        <dbReference type="ChEBI" id="CHEBI:29105"/>
        <label>1</label>
    </ligand>
</feature>
<feature type="binding site" evidence="12">
    <location>
        <position position="539"/>
    </location>
    <ligand>
        <name>Zn(2+)</name>
        <dbReference type="ChEBI" id="CHEBI:29105"/>
        <label>2</label>
    </ligand>
</feature>
<feature type="binding site" evidence="12">
    <location>
        <position position="546"/>
    </location>
    <ligand>
        <name>Zn(2+)</name>
        <dbReference type="ChEBI" id="CHEBI:29105"/>
        <label>2</label>
    </ligand>
</feature>
<feature type="binding site" evidence="12">
    <location>
        <position position="546"/>
    </location>
    <ligand>
        <name>Zn(2+)</name>
        <dbReference type="ChEBI" id="CHEBI:29105"/>
        <label>3</label>
    </ligand>
</feature>
<feature type="binding site" evidence="12">
    <location>
        <position position="549"/>
    </location>
    <ligand>
        <name>Zn(2+)</name>
        <dbReference type="ChEBI" id="CHEBI:29105"/>
        <label>2</label>
    </ligand>
</feature>
<feature type="binding site" evidence="12">
    <location>
        <position position="551"/>
    </location>
    <ligand>
        <name>Zn(2+)</name>
        <dbReference type="ChEBI" id="CHEBI:29105"/>
        <label>3</label>
    </ligand>
</feature>
<feature type="binding site" evidence="12">
    <location>
        <position position="554"/>
    </location>
    <ligand>
        <name>Zn(2+)</name>
        <dbReference type="ChEBI" id="CHEBI:29105"/>
        <label>3</label>
    </ligand>
</feature>
<feature type="binding site" evidence="12">
    <location>
        <position position="599"/>
    </location>
    <ligand>
        <name>Zn(2+)</name>
        <dbReference type="ChEBI" id="CHEBI:29105"/>
        <label>4</label>
    </ligand>
</feature>
<feature type="binding site" evidence="12">
    <location>
        <position position="599"/>
    </location>
    <ligand>
        <name>Zn(2+)</name>
        <dbReference type="ChEBI" id="CHEBI:29105"/>
        <label>5</label>
    </ligand>
</feature>
<feature type="binding site" evidence="12">
    <location>
        <position position="601"/>
    </location>
    <ligand>
        <name>Zn(2+)</name>
        <dbReference type="ChEBI" id="CHEBI:29105"/>
        <label>4</label>
    </ligand>
</feature>
<feature type="binding site" evidence="12">
    <location>
        <position position="606"/>
    </location>
    <ligand>
        <name>Zn(2+)</name>
        <dbReference type="ChEBI" id="CHEBI:29105"/>
        <label>4</label>
    </ligand>
</feature>
<feature type="binding site" evidence="12">
    <location>
        <position position="606"/>
    </location>
    <ligand>
        <name>Zn(2+)</name>
        <dbReference type="ChEBI" id="CHEBI:29105"/>
        <label>6</label>
    </ligand>
</feature>
<feature type="binding site" evidence="12">
    <location>
        <position position="611"/>
    </location>
    <ligand>
        <name>Zn(2+)</name>
        <dbReference type="ChEBI" id="CHEBI:29105"/>
        <label>4</label>
    </ligand>
</feature>
<feature type="binding site" evidence="12">
    <location>
        <position position="613"/>
    </location>
    <ligand>
        <name>Zn(2+)</name>
        <dbReference type="ChEBI" id="CHEBI:29105"/>
        <label>5</label>
    </ligand>
</feature>
<feature type="binding site" evidence="12">
    <location>
        <position position="620"/>
    </location>
    <ligand>
        <name>Zn(2+)</name>
        <dbReference type="ChEBI" id="CHEBI:29105"/>
        <label>5</label>
    </ligand>
</feature>
<feature type="binding site" evidence="12">
    <location>
        <position position="620"/>
    </location>
    <ligand>
        <name>Zn(2+)</name>
        <dbReference type="ChEBI" id="CHEBI:29105"/>
        <label>6</label>
    </ligand>
</feature>
<feature type="binding site" evidence="12">
    <location>
        <position position="624"/>
    </location>
    <ligand>
        <name>Zn(2+)</name>
        <dbReference type="ChEBI" id="CHEBI:29105"/>
        <label>5</label>
    </ligand>
</feature>
<feature type="binding site" evidence="12">
    <location>
        <position position="626"/>
    </location>
    <ligand>
        <name>Zn(2+)</name>
        <dbReference type="ChEBI" id="CHEBI:29105"/>
        <label>6</label>
    </ligand>
</feature>
<feature type="binding site" evidence="12">
    <location>
        <position position="629"/>
    </location>
    <ligand>
        <name>Zn(2+)</name>
        <dbReference type="ChEBI" id="CHEBI:29105"/>
        <label>6</label>
    </ligand>
</feature>
<feature type="site" description="Critical for interaction with target DNA" evidence="6">
    <location>
        <position position="536"/>
    </location>
</feature>
<feature type="site" description="Interaction with DNA" evidence="6">
    <location>
        <position position="574"/>
    </location>
</feature>
<feature type="site" description="Critical for interaction with target DNA" evidence="6">
    <location>
        <position position="610"/>
    </location>
</feature>
<feature type="modified residue" description="N6-acetyllysine" evidence="14">
    <location>
        <position position="244"/>
    </location>
</feature>
<feature type="modified residue" description="N6-acetyllysine" evidence="14">
    <location>
        <position position="249"/>
    </location>
</feature>
<feature type="modified residue" description="Phosphoserine" evidence="16">
    <location>
        <position position="264"/>
    </location>
</feature>
<feature type="modified residue" description="Phosphoserine" evidence="16">
    <location>
        <position position="282"/>
    </location>
</feature>
<feature type="modified residue" description="Phosphoserine" evidence="13 15 16">
    <location>
        <position position="310"/>
    </location>
</feature>
<feature type="modified residue" description="Phosphoserine" evidence="13 15 16">
    <location>
        <position position="314"/>
    </location>
</feature>
<feature type="modified residue" description="Phosphoserine" evidence="16">
    <location>
        <position position="635"/>
    </location>
</feature>
<feature type="cross-link" description="Glycyl lysine isopeptide (Lys-Gly) (interchain with G-Cter in SUMO2)" evidence="17">
    <location>
        <position position="139"/>
    </location>
</feature>
<feature type="cross-link" description="Glycyl lysine isopeptide (Lys-Gly) (interchain with G-Cter in SUMO2)" evidence="17">
    <location>
        <position position="357"/>
    </location>
</feature>
<feature type="cross-link" description="Glycyl lysine isopeptide (Lys-Gly) (interchain with G-Cter in SUMO2)" evidence="17">
    <location>
        <position position="639"/>
    </location>
</feature>
<feature type="cross-link" description="Glycyl lysine isopeptide (Lys-Gly) (interchain with G-Cter in SUMO2)" evidence="17">
    <location>
        <position position="659"/>
    </location>
</feature>
<feature type="cross-link" description="Glycyl lysine isopeptide (Lys-Gly) (interchain with G-Cter in SUMO2)" evidence="17">
    <location>
        <position position="661"/>
    </location>
</feature>
<feature type="splice variant" id="VSP_034272" description="In isoform 4." evidence="10">
    <location>
        <begin position="1"/>
        <end position="401"/>
    </location>
</feature>
<feature type="splice variant" id="VSP_034273" description="In isoform 3." evidence="7 9">
    <location>
        <begin position="8"/>
        <end position="228"/>
    </location>
</feature>
<feature type="splice variant" id="VSP_034274" description="In isoform 2." evidence="8">
    <location>
        <begin position="229"/>
        <end position="317"/>
    </location>
</feature>
<feature type="splice variant" id="VSP_034275" description="In isoform 5." evidence="8">
    <original>IAKKPRTPTSGPVIT</original>
    <variation>VGFFHSLLPELHQRP</variation>
    <location>
        <begin position="229"/>
        <end position="243"/>
    </location>
</feature>
<feature type="splice variant" id="VSP_034276" description="In isoform 5." evidence="8">
    <location>
        <begin position="244"/>
        <end position="749"/>
    </location>
</feature>
<feature type="mutagenesis site" description="Abolishes DNA-binding to the CDK1 promoter; when associated with Y-527." evidence="5">
    <original>C</original>
    <variation>Y</variation>
    <location>
        <position position="525"/>
    </location>
</feature>
<feature type="mutagenesis site" description="Abolishes DNA-binding to the CDK1 promoter; when associated with Y-525." evidence="5">
    <original>C</original>
    <variation>Y</variation>
    <location>
        <position position="527"/>
    </location>
</feature>
<feature type="mutagenesis site" description="Loss of DNA-binding." evidence="6">
    <original>Y</original>
    <variation>A</variation>
    <variation>F</variation>
    <variation>R</variation>
    <location>
        <position position="536"/>
    </location>
</feature>
<feature type="mutagenesis site" description="Loss of DNA-binding." evidence="6">
    <original>Y</original>
    <variation>A</variation>
    <variation>F</variation>
    <variation>R</variation>
    <location>
        <position position="610"/>
    </location>
</feature>
<feature type="sequence conflict" description="In Ref. 3; CAE45981." evidence="11" ref="3">
    <original>N</original>
    <variation>S</variation>
    <location>
        <position position="9"/>
    </location>
</feature>
<feature type="sequence conflict" description="In Ref. 3; CAE45981." evidence="11" ref="3">
    <original>D</original>
    <variation>A</variation>
    <location>
        <position position="743"/>
    </location>
</feature>
<feature type="strand" evidence="18">
    <location>
        <begin position="528"/>
        <end position="530"/>
    </location>
</feature>
<feature type="helix" evidence="18">
    <location>
        <begin position="538"/>
        <end position="541"/>
    </location>
</feature>
<feature type="helix" evidence="18">
    <location>
        <begin position="558"/>
        <end position="560"/>
    </location>
</feature>
<feature type="helix" evidence="18">
    <location>
        <begin position="561"/>
        <end position="574"/>
    </location>
</feature>
<feature type="turn" evidence="18">
    <location>
        <begin position="576"/>
        <end position="579"/>
    </location>
</feature>
<feature type="strand" evidence="18">
    <location>
        <begin position="602"/>
        <end position="604"/>
    </location>
</feature>
<feature type="helix" evidence="18">
    <location>
        <begin position="612"/>
        <end position="615"/>
    </location>
</feature>
<feature type="helix" evidence="18">
    <location>
        <begin position="636"/>
        <end position="642"/>
    </location>
</feature>
<proteinExistence type="evidence at protein level"/>
<reference key="1">
    <citation type="submission" date="2002-11" db="EMBL/GenBank/DDBJ databases">
        <title>The nucleotide sequence of a long cDNA clone isolated from human.</title>
        <authorList>
            <person name="Nagase T."/>
            <person name="Kikuno R."/>
            <person name="Ohara O."/>
        </authorList>
    </citation>
    <scope>NUCLEOTIDE SEQUENCE [LARGE SCALE MRNA] (ISOFORM 4)</scope>
    <source>
        <tissue>Brain</tissue>
    </source>
</reference>
<reference key="2">
    <citation type="journal article" date="2004" name="Nat. Genet.">
        <title>Complete sequencing and characterization of 21,243 full-length human cDNAs.</title>
        <authorList>
            <person name="Ota T."/>
            <person name="Suzuki Y."/>
            <person name="Nishikawa T."/>
            <person name="Otsuki T."/>
            <person name="Sugiyama T."/>
            <person name="Irie R."/>
            <person name="Wakamatsu A."/>
            <person name="Hayashi K."/>
            <person name="Sato H."/>
            <person name="Nagai K."/>
            <person name="Kimura K."/>
            <person name="Makita H."/>
            <person name="Sekine M."/>
            <person name="Obayashi M."/>
            <person name="Nishi T."/>
            <person name="Shibahara T."/>
            <person name="Tanaka T."/>
            <person name="Ishii S."/>
            <person name="Yamamoto J."/>
            <person name="Saito K."/>
            <person name="Kawai Y."/>
            <person name="Isono Y."/>
            <person name="Nakamura Y."/>
            <person name="Nagahari K."/>
            <person name="Murakami K."/>
            <person name="Yasuda T."/>
            <person name="Iwayanagi T."/>
            <person name="Wagatsuma M."/>
            <person name="Shiratori A."/>
            <person name="Sudo H."/>
            <person name="Hosoiri T."/>
            <person name="Kaku Y."/>
            <person name="Kodaira H."/>
            <person name="Kondo H."/>
            <person name="Sugawara M."/>
            <person name="Takahashi M."/>
            <person name="Kanda K."/>
            <person name="Yokoi T."/>
            <person name="Furuya T."/>
            <person name="Kikkawa E."/>
            <person name="Omura Y."/>
            <person name="Abe K."/>
            <person name="Kamihara K."/>
            <person name="Katsuta N."/>
            <person name="Sato K."/>
            <person name="Tanikawa M."/>
            <person name="Yamazaki M."/>
            <person name="Ninomiya K."/>
            <person name="Ishibashi T."/>
            <person name="Yamashita H."/>
            <person name="Murakawa K."/>
            <person name="Fujimori K."/>
            <person name="Tanai H."/>
            <person name="Kimata M."/>
            <person name="Watanabe M."/>
            <person name="Hiraoka S."/>
            <person name="Chiba Y."/>
            <person name="Ishida S."/>
            <person name="Ono Y."/>
            <person name="Takiguchi S."/>
            <person name="Watanabe S."/>
            <person name="Yosida M."/>
            <person name="Hotuta T."/>
            <person name="Kusano J."/>
            <person name="Kanehori K."/>
            <person name="Takahashi-Fujii A."/>
            <person name="Hara H."/>
            <person name="Tanase T.-O."/>
            <person name="Nomura Y."/>
            <person name="Togiya S."/>
            <person name="Komai F."/>
            <person name="Hara R."/>
            <person name="Takeuchi K."/>
            <person name="Arita M."/>
            <person name="Imose N."/>
            <person name="Musashino K."/>
            <person name="Yuuki H."/>
            <person name="Oshima A."/>
            <person name="Sasaki N."/>
            <person name="Aotsuka S."/>
            <person name="Yoshikawa Y."/>
            <person name="Matsunawa H."/>
            <person name="Ichihara T."/>
            <person name="Shiohata N."/>
            <person name="Sano S."/>
            <person name="Moriya S."/>
            <person name="Momiyama H."/>
            <person name="Satoh N."/>
            <person name="Takami S."/>
            <person name="Terashima Y."/>
            <person name="Suzuki O."/>
            <person name="Nakagawa S."/>
            <person name="Senoh A."/>
            <person name="Mizoguchi H."/>
            <person name="Goto Y."/>
            <person name="Shimizu F."/>
            <person name="Wakebe H."/>
            <person name="Hishigaki H."/>
            <person name="Watanabe T."/>
            <person name="Sugiyama A."/>
            <person name="Takemoto M."/>
            <person name="Kawakami B."/>
            <person name="Yamazaki M."/>
            <person name="Watanabe K."/>
            <person name="Kumagai A."/>
            <person name="Itakura S."/>
            <person name="Fukuzumi Y."/>
            <person name="Fujimori Y."/>
            <person name="Komiyama M."/>
            <person name="Tashiro H."/>
            <person name="Tanigami A."/>
            <person name="Fujiwara T."/>
            <person name="Ono T."/>
            <person name="Yamada K."/>
            <person name="Fujii Y."/>
            <person name="Ozaki K."/>
            <person name="Hirao M."/>
            <person name="Ohmori Y."/>
            <person name="Kawabata A."/>
            <person name="Hikiji T."/>
            <person name="Kobatake N."/>
            <person name="Inagaki H."/>
            <person name="Ikema Y."/>
            <person name="Okamoto S."/>
            <person name="Okitani R."/>
            <person name="Kawakami T."/>
            <person name="Noguchi S."/>
            <person name="Itoh T."/>
            <person name="Shigeta K."/>
            <person name="Senba T."/>
            <person name="Matsumura K."/>
            <person name="Nakajima Y."/>
            <person name="Mizuno T."/>
            <person name="Morinaga M."/>
            <person name="Sasaki M."/>
            <person name="Togashi T."/>
            <person name="Oyama M."/>
            <person name="Hata H."/>
            <person name="Watanabe M."/>
            <person name="Komatsu T."/>
            <person name="Mizushima-Sugano J."/>
            <person name="Satoh T."/>
            <person name="Shirai Y."/>
            <person name="Takahashi Y."/>
            <person name="Nakagawa K."/>
            <person name="Okumura K."/>
            <person name="Nagase T."/>
            <person name="Nomura N."/>
            <person name="Kikuchi H."/>
            <person name="Masuho Y."/>
            <person name="Yamashita R."/>
            <person name="Nakai K."/>
            <person name="Yada T."/>
            <person name="Nakamura Y."/>
            <person name="Ohara O."/>
            <person name="Isogai T."/>
            <person name="Sugano S."/>
        </authorList>
    </citation>
    <scope>NUCLEOTIDE SEQUENCE [LARGE SCALE MRNA] (ISOFORM 3)</scope>
</reference>
<reference key="3">
    <citation type="journal article" date="2007" name="BMC Genomics">
        <title>The full-ORF clone resource of the German cDNA consortium.</title>
        <authorList>
            <person name="Bechtel S."/>
            <person name="Rosenfelder H."/>
            <person name="Duda A."/>
            <person name="Schmidt C.P."/>
            <person name="Ernst U."/>
            <person name="Wellenreuther R."/>
            <person name="Mehrle A."/>
            <person name="Schuster C."/>
            <person name="Bahr A."/>
            <person name="Bloecker H."/>
            <person name="Heubner D."/>
            <person name="Hoerlein A."/>
            <person name="Michel G."/>
            <person name="Wedler H."/>
            <person name="Koehrer K."/>
            <person name="Ottenwaelder B."/>
            <person name="Poustka A."/>
            <person name="Wiemann S."/>
            <person name="Schupp I."/>
        </authorList>
    </citation>
    <scope>NUCLEOTIDE SEQUENCE [LARGE SCALE MRNA] (ISOFORMS 1 AND 3)</scope>
    <source>
        <tissue>Uterine endothelium</tissue>
    </source>
</reference>
<reference key="4">
    <citation type="journal article" date="2005" name="Nature">
        <title>Generation and annotation of the DNA sequences of human chromosomes 2 and 4.</title>
        <authorList>
            <person name="Hillier L.W."/>
            <person name="Graves T.A."/>
            <person name="Fulton R.S."/>
            <person name="Fulton L.A."/>
            <person name="Pepin K.H."/>
            <person name="Minx P."/>
            <person name="Wagner-McPherson C."/>
            <person name="Layman D."/>
            <person name="Wylie K."/>
            <person name="Sekhon M."/>
            <person name="Becker M.C."/>
            <person name="Fewell G.A."/>
            <person name="Delehaunty K.D."/>
            <person name="Miner T.L."/>
            <person name="Nash W.E."/>
            <person name="Kremitzki C."/>
            <person name="Oddy L."/>
            <person name="Du H."/>
            <person name="Sun H."/>
            <person name="Bradshaw-Cordum H."/>
            <person name="Ali J."/>
            <person name="Carter J."/>
            <person name="Cordes M."/>
            <person name="Harris A."/>
            <person name="Isak A."/>
            <person name="van Brunt A."/>
            <person name="Nguyen C."/>
            <person name="Du F."/>
            <person name="Courtney L."/>
            <person name="Kalicki J."/>
            <person name="Ozersky P."/>
            <person name="Abbott S."/>
            <person name="Armstrong J."/>
            <person name="Belter E.A."/>
            <person name="Caruso L."/>
            <person name="Cedroni M."/>
            <person name="Cotton M."/>
            <person name="Davidson T."/>
            <person name="Desai A."/>
            <person name="Elliott G."/>
            <person name="Erb T."/>
            <person name="Fronick C."/>
            <person name="Gaige T."/>
            <person name="Haakenson W."/>
            <person name="Haglund K."/>
            <person name="Holmes A."/>
            <person name="Harkins R."/>
            <person name="Kim K."/>
            <person name="Kruchowski S.S."/>
            <person name="Strong C.M."/>
            <person name="Grewal N."/>
            <person name="Goyea E."/>
            <person name="Hou S."/>
            <person name="Levy A."/>
            <person name="Martinka S."/>
            <person name="Mead K."/>
            <person name="McLellan M.D."/>
            <person name="Meyer R."/>
            <person name="Randall-Maher J."/>
            <person name="Tomlinson C."/>
            <person name="Dauphin-Kohlberg S."/>
            <person name="Kozlowicz-Reilly A."/>
            <person name="Shah N."/>
            <person name="Swearengen-Shahid S."/>
            <person name="Snider J."/>
            <person name="Strong J.T."/>
            <person name="Thompson J."/>
            <person name="Yoakum M."/>
            <person name="Leonard S."/>
            <person name="Pearman C."/>
            <person name="Trani L."/>
            <person name="Radionenko M."/>
            <person name="Waligorski J.E."/>
            <person name="Wang C."/>
            <person name="Rock S.M."/>
            <person name="Tin-Wollam A.-M."/>
            <person name="Maupin R."/>
            <person name="Latreille P."/>
            <person name="Wendl M.C."/>
            <person name="Yang S.-P."/>
            <person name="Pohl C."/>
            <person name="Wallis J.W."/>
            <person name="Spieth J."/>
            <person name="Bieri T.A."/>
            <person name="Berkowicz N."/>
            <person name="Nelson J.O."/>
            <person name="Osborne J."/>
            <person name="Ding L."/>
            <person name="Meyer R."/>
            <person name="Sabo A."/>
            <person name="Shotland Y."/>
            <person name="Sinha P."/>
            <person name="Wohldmann P.E."/>
            <person name="Cook L.L."/>
            <person name="Hickenbotham M.T."/>
            <person name="Eldred J."/>
            <person name="Williams D."/>
            <person name="Jones T.A."/>
            <person name="She X."/>
            <person name="Ciccarelli F.D."/>
            <person name="Izaurralde E."/>
            <person name="Taylor J."/>
            <person name="Schmutz J."/>
            <person name="Myers R.M."/>
            <person name="Cox D.R."/>
            <person name="Huang X."/>
            <person name="McPherson J.D."/>
            <person name="Mardis E.R."/>
            <person name="Clifton S.W."/>
            <person name="Warren W.C."/>
            <person name="Chinwalla A.T."/>
            <person name="Eddy S.R."/>
            <person name="Marra M.A."/>
            <person name="Ovcharenko I."/>
            <person name="Furey T.S."/>
            <person name="Miller W."/>
            <person name="Eichler E.E."/>
            <person name="Bork P."/>
            <person name="Suyama M."/>
            <person name="Torrents D."/>
            <person name="Waterston R.H."/>
            <person name="Wilson R.K."/>
        </authorList>
    </citation>
    <scope>NUCLEOTIDE SEQUENCE [LARGE SCALE GENOMIC DNA]</scope>
</reference>
<reference key="5">
    <citation type="journal article" date="2004" name="Genome Res.">
        <title>The status, quality, and expansion of the NIH full-length cDNA project: the Mammalian Gene Collection (MGC).</title>
        <authorList>
            <consortium name="The MGC Project Team"/>
        </authorList>
    </citation>
    <scope>NUCLEOTIDE SEQUENCE [LARGE SCALE MRNA] (ISOFORMS 2 AND 5)</scope>
</reference>
<reference key="6">
    <citation type="journal article" date="2007" name="Cell Cycle">
        <title>LINC, a human complex that is related to pRB-containing complexes in invertebrates regulates the expression of G2/M genes.</title>
        <authorList>
            <person name="Schmit F."/>
            <person name="Korenjak M."/>
            <person name="Mannefeld M."/>
            <person name="Schmitt K."/>
            <person name="Franke C."/>
            <person name="von Eyss B."/>
            <person name="Gagrica S."/>
            <person name="Haenel F."/>
            <person name="Brehm A."/>
            <person name="Gaubatz S."/>
        </authorList>
    </citation>
    <scope>FUNCTION</scope>
    <scope>IDENTIFICATION IN THE DREAM COMPLEX</scope>
</reference>
<reference key="7">
    <citation type="journal article" date="2007" name="Mol. Cell">
        <title>Evolutionarily conserved multisubunit RBL2/p130 and E2F4 protein complex represses human cell cycle-dependent genes in quiescence.</title>
        <authorList>
            <person name="Litovchick L."/>
            <person name="Sadasivam S."/>
            <person name="Florens L."/>
            <person name="Zhu X."/>
            <person name="Swanson S.K."/>
            <person name="Velmurugan S."/>
            <person name="Chen R."/>
            <person name="Washburn M.P."/>
            <person name="Liu X.S."/>
            <person name="DeCaprio J.A."/>
        </authorList>
    </citation>
    <scope>FUNCTION</scope>
    <scope>IDENTIFICATION IN THE DREAM COMPLEX</scope>
</reference>
<reference key="8">
    <citation type="journal article" date="2008" name="J. Proteome Res.">
        <title>Combining protein-based IMAC, peptide-based IMAC, and MudPIT for efficient phosphoproteomic analysis.</title>
        <authorList>
            <person name="Cantin G.T."/>
            <person name="Yi W."/>
            <person name="Lu B."/>
            <person name="Park S.K."/>
            <person name="Xu T."/>
            <person name="Lee J.-D."/>
            <person name="Yates J.R. III"/>
        </authorList>
    </citation>
    <scope>PHOSPHORYLATION [LARGE SCALE ANALYSIS] AT SER-310 AND SER-314</scope>
    <scope>IDENTIFICATION BY MASS SPECTROMETRY [LARGE SCALE ANALYSIS]</scope>
    <source>
        <tissue>Cervix carcinoma</tissue>
    </source>
</reference>
<reference key="9">
    <citation type="journal article" date="2008" name="Proc. Natl. Acad. Sci. U.S.A.">
        <title>A quantitative atlas of mitotic phosphorylation.</title>
        <authorList>
            <person name="Dephoure N."/>
            <person name="Zhou C."/>
            <person name="Villen J."/>
            <person name="Beausoleil S.A."/>
            <person name="Bakalarski C.E."/>
            <person name="Elledge S.J."/>
            <person name="Gygi S.P."/>
        </authorList>
    </citation>
    <scope>IDENTIFICATION BY MASS SPECTROMETRY [LARGE SCALE ANALYSIS]</scope>
    <source>
        <tissue>Cervix carcinoma</tissue>
    </source>
</reference>
<reference key="10">
    <citation type="journal article" date="2009" name="FEBS J.">
        <title>LIN54 is an essential core subunit of the DREAM/LINC complex that binds to the cdc2 promoter in a sequence-specific manner.</title>
        <authorList>
            <person name="Schmit F."/>
            <person name="Cremer S."/>
            <person name="Gaubatz S."/>
        </authorList>
    </citation>
    <scope>FUNCTION</scope>
    <scope>DNA-BINDING TO CDK1 PROMOTER</scope>
    <scope>DOMAIN</scope>
    <scope>CELL CYCLE INVOLVEMENT</scope>
    <scope>MUTAGENESIS OF CYS-525 AND CYS-527</scope>
</reference>
<reference key="11">
    <citation type="journal article" date="2009" name="Science">
        <title>Lysine acetylation targets protein complexes and co-regulates major cellular functions.</title>
        <authorList>
            <person name="Choudhary C."/>
            <person name="Kumar C."/>
            <person name="Gnad F."/>
            <person name="Nielsen M.L."/>
            <person name="Rehman M."/>
            <person name="Walther T.C."/>
            <person name="Olsen J.V."/>
            <person name="Mann M."/>
        </authorList>
    </citation>
    <scope>ACETYLATION [LARGE SCALE ANALYSIS] AT LYS-244 AND LYS-249</scope>
    <scope>IDENTIFICATION BY MASS SPECTROMETRY [LARGE SCALE ANALYSIS]</scope>
</reference>
<reference key="12">
    <citation type="journal article" date="2010" name="Sci. Signal.">
        <title>Quantitative phosphoproteomics reveals widespread full phosphorylation site occupancy during mitosis.</title>
        <authorList>
            <person name="Olsen J.V."/>
            <person name="Vermeulen M."/>
            <person name="Santamaria A."/>
            <person name="Kumar C."/>
            <person name="Miller M.L."/>
            <person name="Jensen L.J."/>
            <person name="Gnad F."/>
            <person name="Cox J."/>
            <person name="Jensen T.S."/>
            <person name="Nigg E.A."/>
            <person name="Brunak S."/>
            <person name="Mann M."/>
        </authorList>
    </citation>
    <scope>PHOSPHORYLATION [LARGE SCALE ANALYSIS] AT SER-310 AND SER-314</scope>
    <scope>IDENTIFICATION BY MASS SPECTROMETRY [LARGE SCALE ANALYSIS]</scope>
    <source>
        <tissue>Cervix carcinoma</tissue>
    </source>
</reference>
<reference key="13">
    <citation type="journal article" date="2013" name="J. Proteome Res.">
        <title>Toward a comprehensive characterization of a human cancer cell phosphoproteome.</title>
        <authorList>
            <person name="Zhou H."/>
            <person name="Di Palma S."/>
            <person name="Preisinger C."/>
            <person name="Peng M."/>
            <person name="Polat A.N."/>
            <person name="Heck A.J."/>
            <person name="Mohammed S."/>
        </authorList>
    </citation>
    <scope>PHOSPHORYLATION [LARGE SCALE ANALYSIS] AT SER-264; SER-282; SER-310; SER-314 AND SER-635</scope>
    <scope>IDENTIFICATION BY MASS SPECTROMETRY [LARGE SCALE ANALYSIS]</scope>
    <source>
        <tissue>Cervix carcinoma</tissue>
        <tissue>Erythroleukemia</tissue>
    </source>
</reference>
<reference key="14">
    <citation type="journal article" date="2017" name="Nat. Struct. Mol. Biol.">
        <title>Site-specific mapping of the human SUMO proteome reveals co-modification with phosphorylation.</title>
        <authorList>
            <person name="Hendriks I.A."/>
            <person name="Lyon D."/>
            <person name="Young C."/>
            <person name="Jensen L.J."/>
            <person name="Vertegaal A.C."/>
            <person name="Nielsen M.L."/>
        </authorList>
    </citation>
    <scope>SUMOYLATION [LARGE SCALE ANALYSIS] AT LYS-139; LYS-357; LYS-639; LYS-659 AND LYS-661</scope>
    <scope>IDENTIFICATION BY MASS SPECTROMETRY [LARGE SCALE ANALYSIS]</scope>
</reference>
<reference key="15">
    <citation type="journal article" date="2016" name="Nat. Commun.">
        <title>Structural basis for LIN54 recognition of CHR elements in cell cycle-regulated promoters.</title>
        <authorList>
            <person name="Marceau A.H."/>
            <person name="Felthousen J.G."/>
            <person name="Goetsch P.D."/>
            <person name="Iness A.N."/>
            <person name="Lee H.W."/>
            <person name="Tripathi S.M."/>
            <person name="Strome S."/>
            <person name="Litovchick L."/>
            <person name="Rubin S.M."/>
        </authorList>
    </citation>
    <scope>X-RAY CRYSTALLOGRAPHY (2.42 ANGSTROMS) OF 515-646 IN COMPLEX WITH DNA AND ZINC</scope>
    <scope>FUNCTION</scope>
    <scope>DOMAIN</scope>
    <scope>MUTAGENESIS OF TYR-536 AND TYR-610</scope>
</reference>
<gene>
    <name type="primary">LIN54</name>
    <name type="synonym">CXCDC1</name>
    <name type="synonym">KIAA2037</name>
</gene>
<protein>
    <recommendedName>
        <fullName>Protein lin-54 homolog</fullName>
    </recommendedName>
    <alternativeName>
        <fullName>CXC domain-containing protein 1</fullName>
    </alternativeName>
</protein>
<dbReference type="EMBL" id="AB111889">
    <property type="protein sequence ID" value="BAC98377.1"/>
    <property type="status" value="ALT_INIT"/>
    <property type="molecule type" value="mRNA"/>
</dbReference>
<dbReference type="EMBL" id="AK292769">
    <property type="protein sequence ID" value="BAF85458.1"/>
    <property type="molecule type" value="mRNA"/>
</dbReference>
<dbReference type="EMBL" id="BX640657">
    <property type="protein sequence ID" value="CAE45799.1"/>
    <property type="molecule type" value="mRNA"/>
</dbReference>
<dbReference type="EMBL" id="BX640966">
    <property type="protein sequence ID" value="CAE45981.1"/>
    <property type="molecule type" value="mRNA"/>
</dbReference>
<dbReference type="EMBL" id="AC021105">
    <property type="status" value="NOT_ANNOTATED_CDS"/>
    <property type="molecule type" value="Genomic_DNA"/>
</dbReference>
<dbReference type="EMBL" id="BC109277">
    <property type="protein sequence ID" value="AAI09278.1"/>
    <property type="molecule type" value="mRNA"/>
</dbReference>
<dbReference type="EMBL" id="BC109278">
    <property type="protein sequence ID" value="AAI09279.1"/>
    <property type="molecule type" value="mRNA"/>
</dbReference>
<dbReference type="CCDS" id="CCDS3599.1">
    <molecule id="Q6MZP7-1"/>
</dbReference>
<dbReference type="CCDS" id="CCDS47089.1">
    <molecule id="Q6MZP7-3"/>
</dbReference>
<dbReference type="CCDS" id="CCDS75157.1">
    <molecule id="Q6MZP7-2"/>
</dbReference>
<dbReference type="RefSeq" id="NP_001108479.1">
    <molecule id="Q6MZP7-3"/>
    <property type="nucleotide sequence ID" value="NM_001115007.3"/>
</dbReference>
<dbReference type="RefSeq" id="NP_001108480.1">
    <molecule id="Q6MZP7-3"/>
    <property type="nucleotide sequence ID" value="NM_001115008.3"/>
</dbReference>
<dbReference type="RefSeq" id="NP_001275925.1">
    <molecule id="Q6MZP7-2"/>
    <property type="nucleotide sequence ID" value="NM_001288996.2"/>
</dbReference>
<dbReference type="RefSeq" id="NP_001275926.1">
    <molecule id="Q6MZP7-3"/>
    <property type="nucleotide sequence ID" value="NM_001288997.1"/>
</dbReference>
<dbReference type="RefSeq" id="NP_919258.2">
    <molecule id="Q6MZP7-1"/>
    <property type="nucleotide sequence ID" value="NM_194282.4"/>
</dbReference>
<dbReference type="RefSeq" id="XP_005262807.1">
    <molecule id="Q6MZP7-1"/>
    <property type="nucleotide sequence ID" value="XM_005262750.5"/>
</dbReference>
<dbReference type="RefSeq" id="XP_006714144.1">
    <molecule id="Q6MZP7-1"/>
    <property type="nucleotide sequence ID" value="XM_006714081.4"/>
</dbReference>
<dbReference type="RefSeq" id="XP_016863217.1">
    <molecule id="Q6MZP7-2"/>
    <property type="nucleotide sequence ID" value="XM_017007728.2"/>
</dbReference>
<dbReference type="RefSeq" id="XP_016863218.1">
    <property type="nucleotide sequence ID" value="XM_017007729.1"/>
</dbReference>
<dbReference type="RefSeq" id="XP_016863219.1">
    <property type="nucleotide sequence ID" value="XM_017007730.1"/>
</dbReference>
<dbReference type="RefSeq" id="XP_054204888.1">
    <molecule id="Q6MZP7-1"/>
    <property type="nucleotide sequence ID" value="XM_054348913.1"/>
</dbReference>
<dbReference type="RefSeq" id="XP_054204889.1">
    <molecule id="Q6MZP7-1"/>
    <property type="nucleotide sequence ID" value="XM_054348914.1"/>
</dbReference>
<dbReference type="RefSeq" id="XP_054204890.1">
    <molecule id="Q6MZP7-2"/>
    <property type="nucleotide sequence ID" value="XM_054348915.1"/>
</dbReference>
<dbReference type="PDB" id="5FD3">
    <property type="method" value="X-ray"/>
    <property type="resolution" value="2.42 A"/>
    <property type="chains" value="A/B=515-646"/>
</dbReference>
<dbReference type="PDBsum" id="5FD3"/>
<dbReference type="SMR" id="Q6MZP7"/>
<dbReference type="BioGRID" id="126328">
    <property type="interactions" value="93"/>
</dbReference>
<dbReference type="ComplexPortal" id="CPX-2366">
    <property type="entry name" value="Myb-MuvB transcriptional activation complex"/>
</dbReference>
<dbReference type="ComplexPortal" id="CPX-2368">
    <property type="entry name" value="DREAM transcriptional repressor complex, RBL1 variant"/>
</dbReference>
<dbReference type="ComplexPortal" id="CPX-7461">
    <property type="entry name" value="DREAM transcriptional repressor complex, RBL2 variant"/>
</dbReference>
<dbReference type="ComplexPortal" id="CPX-7462">
    <property type="entry name" value="Myb-MuvB-FOXM1 transcriptional activation complex"/>
</dbReference>
<dbReference type="CORUM" id="Q6MZP7"/>
<dbReference type="FunCoup" id="Q6MZP7">
    <property type="interactions" value="3793"/>
</dbReference>
<dbReference type="IntAct" id="Q6MZP7">
    <property type="interactions" value="102"/>
</dbReference>
<dbReference type="MINT" id="Q6MZP7"/>
<dbReference type="STRING" id="9606.ENSP00000341947"/>
<dbReference type="GlyConnect" id="2849">
    <property type="glycosylation" value="1 O-GlcNAc glycan (1 site)"/>
</dbReference>
<dbReference type="GlyCosmos" id="Q6MZP7">
    <property type="glycosylation" value="15 sites, 2 glycans"/>
</dbReference>
<dbReference type="GlyGen" id="Q6MZP7">
    <property type="glycosylation" value="41 sites, 2 O-linked glycans (40 sites)"/>
</dbReference>
<dbReference type="iPTMnet" id="Q6MZP7"/>
<dbReference type="PhosphoSitePlus" id="Q6MZP7"/>
<dbReference type="BioMuta" id="LIN54"/>
<dbReference type="DMDM" id="313104222"/>
<dbReference type="jPOST" id="Q6MZP7"/>
<dbReference type="MassIVE" id="Q6MZP7"/>
<dbReference type="PaxDb" id="9606-ENSP00000341947"/>
<dbReference type="PeptideAtlas" id="Q6MZP7"/>
<dbReference type="ProteomicsDB" id="66576">
    <molecule id="Q6MZP7-1"/>
</dbReference>
<dbReference type="ProteomicsDB" id="66577">
    <molecule id="Q6MZP7-2"/>
</dbReference>
<dbReference type="ProteomicsDB" id="66578">
    <molecule id="Q6MZP7-3"/>
</dbReference>
<dbReference type="ProteomicsDB" id="66579">
    <molecule id="Q6MZP7-4"/>
</dbReference>
<dbReference type="ProteomicsDB" id="66580">
    <molecule id="Q6MZP7-5"/>
</dbReference>
<dbReference type="Pumba" id="Q6MZP7"/>
<dbReference type="Antibodypedia" id="55895">
    <property type="antibodies" value="57 antibodies from 18 providers"/>
</dbReference>
<dbReference type="DNASU" id="132660"/>
<dbReference type="Ensembl" id="ENST00000340417.8">
    <molecule id="Q6MZP7-1"/>
    <property type="protein sequence ID" value="ENSP00000341947.3"/>
    <property type="gene ID" value="ENSG00000189308.11"/>
</dbReference>
<dbReference type="Ensembl" id="ENST00000442461.6">
    <molecule id="Q6MZP7-3"/>
    <property type="protein sequence ID" value="ENSP00000398265.2"/>
    <property type="gene ID" value="ENSG00000189308.11"/>
</dbReference>
<dbReference type="Ensembl" id="ENST00000446851.6">
    <molecule id="Q6MZP7-3"/>
    <property type="protein sequence ID" value="ENSP00000407139.2"/>
    <property type="gene ID" value="ENSG00000189308.11"/>
</dbReference>
<dbReference type="Ensembl" id="ENST00000505397.1">
    <molecule id="Q6MZP7-1"/>
    <property type="protein sequence ID" value="ENSP00000425844.1"/>
    <property type="gene ID" value="ENSG00000189308.11"/>
</dbReference>
<dbReference type="Ensembl" id="ENST00000506560.5">
    <molecule id="Q6MZP7-2"/>
    <property type="protein sequence ID" value="ENSP00000423475.1"/>
    <property type="gene ID" value="ENSG00000189308.11"/>
</dbReference>
<dbReference type="Ensembl" id="ENST00000508171.5">
    <molecule id="Q6MZP7-5"/>
    <property type="protein sequence ID" value="ENSP00000427413.1"/>
    <property type="gene ID" value="ENSG00000189308.11"/>
</dbReference>
<dbReference type="Ensembl" id="ENST00000510557.5">
    <molecule id="Q6MZP7-3"/>
    <property type="protein sequence ID" value="ENSP00000421045.1"/>
    <property type="gene ID" value="ENSG00000189308.11"/>
</dbReference>
<dbReference type="GeneID" id="132660"/>
<dbReference type="KEGG" id="hsa:132660"/>
<dbReference type="MANE-Select" id="ENST00000340417.8">
    <property type="protein sequence ID" value="ENSP00000341947.3"/>
    <property type="RefSeq nucleotide sequence ID" value="NM_194282.4"/>
    <property type="RefSeq protein sequence ID" value="NP_919258.2"/>
</dbReference>
<dbReference type="UCSC" id="uc003hnx.5">
    <molecule id="Q6MZP7-1"/>
    <property type="organism name" value="human"/>
</dbReference>
<dbReference type="AGR" id="HGNC:25397"/>
<dbReference type="CTD" id="132660"/>
<dbReference type="DisGeNET" id="132660"/>
<dbReference type="GeneCards" id="LIN54"/>
<dbReference type="HGNC" id="HGNC:25397">
    <property type="gene designation" value="LIN54"/>
</dbReference>
<dbReference type="HPA" id="ENSG00000189308">
    <property type="expression patterns" value="Low tissue specificity"/>
</dbReference>
<dbReference type="MIM" id="613367">
    <property type="type" value="gene"/>
</dbReference>
<dbReference type="neXtProt" id="NX_Q6MZP7"/>
<dbReference type="OpenTargets" id="ENSG00000189308"/>
<dbReference type="PharmGKB" id="PA162394056"/>
<dbReference type="VEuPathDB" id="HostDB:ENSG00000189308"/>
<dbReference type="eggNOG" id="KOG1171">
    <property type="taxonomic scope" value="Eukaryota"/>
</dbReference>
<dbReference type="GeneTree" id="ENSGT00940000155881"/>
<dbReference type="HOGENOM" id="CLU_024128_1_0_1"/>
<dbReference type="InParanoid" id="Q6MZP7"/>
<dbReference type="OMA" id="XKPVVVN"/>
<dbReference type="OrthoDB" id="6283463at2759"/>
<dbReference type="PAN-GO" id="Q6MZP7">
    <property type="GO annotations" value="2 GO annotations based on evolutionary models"/>
</dbReference>
<dbReference type="PhylomeDB" id="Q6MZP7"/>
<dbReference type="TreeFam" id="TF313189"/>
<dbReference type="PathwayCommons" id="Q6MZP7"/>
<dbReference type="Reactome" id="R-HSA-1362277">
    <property type="pathway name" value="Transcription of E2F targets under negative control by DREAM complex"/>
</dbReference>
<dbReference type="Reactome" id="R-HSA-1362300">
    <property type="pathway name" value="Transcription of E2F targets under negative control by p107 (RBL1) and p130 (RBL2) in complex with HDAC1"/>
</dbReference>
<dbReference type="Reactome" id="R-HSA-1538133">
    <property type="pathway name" value="G0 and Early G1"/>
</dbReference>
<dbReference type="Reactome" id="R-HSA-156711">
    <property type="pathway name" value="Polo-like kinase mediated events"/>
</dbReference>
<dbReference type="Reactome" id="R-HSA-69202">
    <property type="pathway name" value="Cyclin E associated events during G1/S transition"/>
</dbReference>
<dbReference type="Reactome" id="R-HSA-69205">
    <property type="pathway name" value="G1/S-Specific Transcription"/>
</dbReference>
<dbReference type="Reactome" id="R-HSA-69656">
    <property type="pathway name" value="Cyclin A:Cdk2-associated events at S phase entry"/>
</dbReference>
<dbReference type="SignaLink" id="Q6MZP7"/>
<dbReference type="BioGRID-ORCS" id="132660">
    <property type="hits" value="231 hits in 1172 CRISPR screens"/>
</dbReference>
<dbReference type="ChiTaRS" id="LIN54">
    <property type="organism name" value="human"/>
</dbReference>
<dbReference type="GenomeRNAi" id="132660"/>
<dbReference type="Pharos" id="Q6MZP7">
    <property type="development level" value="Tbio"/>
</dbReference>
<dbReference type="PRO" id="PR:Q6MZP7"/>
<dbReference type="Proteomes" id="UP000005640">
    <property type="component" value="Chromosome 4"/>
</dbReference>
<dbReference type="RNAct" id="Q6MZP7">
    <property type="molecule type" value="protein"/>
</dbReference>
<dbReference type="Bgee" id="ENSG00000189308">
    <property type="expression patterns" value="Expressed in ventricular zone and 106 other cell types or tissues"/>
</dbReference>
<dbReference type="ExpressionAtlas" id="Q6MZP7">
    <property type="expression patterns" value="baseline and differential"/>
</dbReference>
<dbReference type="GO" id="GO:0005654">
    <property type="term" value="C:nucleoplasm"/>
    <property type="evidence" value="ECO:0000304"/>
    <property type="project" value="Reactome"/>
</dbReference>
<dbReference type="GO" id="GO:0005634">
    <property type="term" value="C:nucleus"/>
    <property type="evidence" value="ECO:0000318"/>
    <property type="project" value="GO_Central"/>
</dbReference>
<dbReference type="GO" id="GO:0090571">
    <property type="term" value="C:RNA polymerase II transcription repressor complex"/>
    <property type="evidence" value="ECO:0000314"/>
    <property type="project" value="ARUK-UCL"/>
</dbReference>
<dbReference type="GO" id="GO:0046872">
    <property type="term" value="F:metal ion binding"/>
    <property type="evidence" value="ECO:0007669"/>
    <property type="project" value="UniProtKB-KW"/>
</dbReference>
<dbReference type="GO" id="GO:0003680">
    <property type="term" value="F:minor groove of adenine-thymine-rich DNA binding"/>
    <property type="evidence" value="ECO:0000314"/>
    <property type="project" value="ARUK-UCL"/>
</dbReference>
<dbReference type="GO" id="GO:0001067">
    <property type="term" value="F:transcription regulatory region nucleic acid binding"/>
    <property type="evidence" value="ECO:0000314"/>
    <property type="project" value="ARUK-UCL"/>
</dbReference>
<dbReference type="GO" id="GO:0034728">
    <property type="term" value="P:nucleosome organization"/>
    <property type="evidence" value="ECO:0000314"/>
    <property type="project" value="ARUK-UCL"/>
</dbReference>
<dbReference type="GO" id="GO:0006355">
    <property type="term" value="P:regulation of DNA-templated transcription"/>
    <property type="evidence" value="ECO:0000318"/>
    <property type="project" value="GO_Central"/>
</dbReference>
<dbReference type="InterPro" id="IPR005172">
    <property type="entry name" value="CRC"/>
</dbReference>
<dbReference type="InterPro" id="IPR028307">
    <property type="entry name" value="Lin-54_fam"/>
</dbReference>
<dbReference type="InterPro" id="IPR033467">
    <property type="entry name" value="Tesmin/TSO1-like_CXC"/>
</dbReference>
<dbReference type="PANTHER" id="PTHR12446:SF36">
    <property type="entry name" value="PROTEIN LIN-54 HOMOLOG"/>
    <property type="match status" value="1"/>
</dbReference>
<dbReference type="PANTHER" id="PTHR12446">
    <property type="entry name" value="TESMIN/TSO1-RELATED"/>
    <property type="match status" value="1"/>
</dbReference>
<dbReference type="Pfam" id="PF03638">
    <property type="entry name" value="TCR"/>
    <property type="match status" value="2"/>
</dbReference>
<dbReference type="SMART" id="SM01114">
    <property type="entry name" value="CXC"/>
    <property type="match status" value="2"/>
</dbReference>
<dbReference type="PROSITE" id="PS51634">
    <property type="entry name" value="CRC"/>
    <property type="match status" value="1"/>
</dbReference>
<keyword id="KW-0002">3D-structure</keyword>
<keyword id="KW-0007">Acetylation</keyword>
<keyword id="KW-0010">Activator</keyword>
<keyword id="KW-0025">Alternative splicing</keyword>
<keyword id="KW-0131">Cell cycle</keyword>
<keyword id="KW-0238">DNA-binding</keyword>
<keyword id="KW-1017">Isopeptide bond</keyword>
<keyword id="KW-0479">Metal-binding</keyword>
<keyword id="KW-0539">Nucleus</keyword>
<keyword id="KW-0597">Phosphoprotein</keyword>
<keyword id="KW-1267">Proteomics identification</keyword>
<keyword id="KW-1185">Reference proteome</keyword>
<keyword id="KW-0678">Repressor</keyword>
<keyword id="KW-0804">Transcription</keyword>
<keyword id="KW-0805">Transcription regulation</keyword>
<keyword id="KW-0832">Ubl conjugation</keyword>
<keyword id="KW-0862">Zinc</keyword>
<evidence type="ECO:0000255" key="1">
    <source>
        <dbReference type="PROSITE-ProRule" id="PRU00971"/>
    </source>
</evidence>
<evidence type="ECO:0000256" key="2">
    <source>
        <dbReference type="SAM" id="MobiDB-lite"/>
    </source>
</evidence>
<evidence type="ECO:0000269" key="3">
    <source>
    </source>
</evidence>
<evidence type="ECO:0000269" key="4">
    <source>
    </source>
</evidence>
<evidence type="ECO:0000269" key="5">
    <source>
    </source>
</evidence>
<evidence type="ECO:0000269" key="6">
    <source>
    </source>
</evidence>
<evidence type="ECO:0000303" key="7">
    <source>
    </source>
</evidence>
<evidence type="ECO:0000303" key="8">
    <source>
    </source>
</evidence>
<evidence type="ECO:0000303" key="9">
    <source>
    </source>
</evidence>
<evidence type="ECO:0000303" key="10">
    <source ref="1"/>
</evidence>
<evidence type="ECO:0000305" key="11"/>
<evidence type="ECO:0007744" key="12">
    <source>
        <dbReference type="PDB" id="5FD3"/>
    </source>
</evidence>
<evidence type="ECO:0007744" key="13">
    <source>
    </source>
</evidence>
<evidence type="ECO:0007744" key="14">
    <source>
    </source>
</evidence>
<evidence type="ECO:0007744" key="15">
    <source>
    </source>
</evidence>
<evidence type="ECO:0007744" key="16">
    <source>
    </source>
</evidence>
<evidence type="ECO:0007744" key="17">
    <source>
    </source>
</evidence>
<evidence type="ECO:0007829" key="18">
    <source>
        <dbReference type="PDB" id="5FD3"/>
    </source>
</evidence>
<sequence length="749" mass="79494">MEVVPAEVNSLLPEEIMDTGITLVDDDSIEAVIVSSPIPMETELEEIVNINSTGDSTATPISTEPITVYSNHTNQVAVNTTITKADSNTTVKPAFPSGLQKLGAQTPVTISANQIILNKVSQTSDLKLGNQTLKPDGQKLILTTLGKSGSPIVLALPHSQLPQAQKVTTQAQSGDAKLPPQQIKVVTIGGRPEVKPVIGVSALTPGSQLINTTTQPSVLQTQQLKTVQIAKKPRTPTSGPVITKLIFAKPINSKAVTGQTTQVSPPVIAGRVLSQSTPGTPSKTITISESGVIGSTLNSTTQTPNKIAISPLKSPNKAVKSTVQTITVGGVSTSQFKTIIPLATAPNVQQIQVPGSKFHYVRLVTATSASSSTQPVSQNPSTNTQPLQQAKPVVVNTTPVRMSVPIVSAQAVKQVVPKPINPTSQIVTTSQPQQRLIMPATPLPQIQPNLTNLPPGTVLAPAPGTGNVGYAVLPAQYVTQLQQSSYVSIASNSTFTGTSGIQTQARLPFNGIIPSESASRPRKPCNCTKSLCLKLYCDCFANGEFCNNCNCTNCYNNLEHENERQKAIKACLDRNPEAFKPKIGKGKEGESDRRHSKGCNCKRSGCLKNYCECYEAKIMCSSICKCIGCKNFEESPERKTLMHLADAAEVRVQQQTAAKTKLSSQISDLLTRPTPALNSGGGKLPFTFVTKEVAEATCNCLLAQAEQADKKGKSKAAAERMILEEFGRCLMSVINSAGKAKSDPCAMNC</sequence>
<accession>Q6MZP7</accession>
<accession>Q32M68</accession>
<accession>Q32M69</accession>
<accession>Q6N071</accession>
<accession>Q76B60</accession>
<organism>
    <name type="scientific">Homo sapiens</name>
    <name type="common">Human</name>
    <dbReference type="NCBI Taxonomy" id="9606"/>
    <lineage>
        <taxon>Eukaryota</taxon>
        <taxon>Metazoa</taxon>
        <taxon>Chordata</taxon>
        <taxon>Craniata</taxon>
        <taxon>Vertebrata</taxon>
        <taxon>Euteleostomi</taxon>
        <taxon>Mammalia</taxon>
        <taxon>Eutheria</taxon>
        <taxon>Euarchontoglires</taxon>
        <taxon>Primates</taxon>
        <taxon>Haplorrhini</taxon>
        <taxon>Catarrhini</taxon>
        <taxon>Hominidae</taxon>
        <taxon>Homo</taxon>
    </lineage>
</organism>